<reference key="1">
    <citation type="journal article" date="1994" name="Nucleic Acids Res.">
        <title>The tryptophan repressor sequence is highly conserved among the Enterobacteriaceae.</title>
        <authorList>
            <person name="Arvidson D.N."/>
            <person name="Arvidson C.G."/>
            <person name="Lawson C.L."/>
            <person name="Miner J."/>
            <person name="Adams C."/>
            <person name="Youderian P."/>
        </authorList>
    </citation>
    <scope>NUCLEOTIDE SEQUENCE [GENOMIC DNA]</scope>
</reference>
<feature type="chain" id="PRO_0000196559" description="Soluble lytic murein transglycosylase">
    <location>
        <begin position="1" status="less than"/>
        <end position="42"/>
    </location>
</feature>
<feature type="non-terminal residue">
    <location>
        <position position="1"/>
    </location>
</feature>
<name>SLT_ENTCL</name>
<dbReference type="EC" id="4.2.2.n1"/>
<dbReference type="EMBL" id="L26583">
    <property type="protein sequence ID" value="AAA20182.1"/>
    <property type="molecule type" value="Unassigned_DNA"/>
</dbReference>
<dbReference type="PIR" id="S45256">
    <property type="entry name" value="S45256"/>
</dbReference>
<dbReference type="SMR" id="P39433"/>
<dbReference type="eggNOG" id="COG0741">
    <property type="taxonomic scope" value="Bacteria"/>
</dbReference>
<dbReference type="GO" id="GO:0042597">
    <property type="term" value="C:periplasmic space"/>
    <property type="evidence" value="ECO:0007669"/>
    <property type="project" value="UniProtKB-SubCell"/>
</dbReference>
<dbReference type="GO" id="GO:0016829">
    <property type="term" value="F:lyase activity"/>
    <property type="evidence" value="ECO:0007669"/>
    <property type="project" value="UniProtKB-KW"/>
</dbReference>
<dbReference type="GO" id="GO:0071555">
    <property type="term" value="P:cell wall organization"/>
    <property type="evidence" value="ECO:0007669"/>
    <property type="project" value="UniProtKB-KW"/>
</dbReference>
<dbReference type="Gene3D" id="1.10.530.10">
    <property type="match status" value="1"/>
</dbReference>
<dbReference type="InterPro" id="IPR023346">
    <property type="entry name" value="Lysozyme-like_dom_sf"/>
</dbReference>
<dbReference type="SUPFAM" id="SSF53955">
    <property type="entry name" value="Lysozyme-like"/>
    <property type="match status" value="1"/>
</dbReference>
<proteinExistence type="inferred from homology"/>
<sequence>ESIPFSETRGYVKNVLAYDAYYRHFMGEKDALMSDAEWQRRY</sequence>
<gene>
    <name type="primary">slt</name>
</gene>
<evidence type="ECO:0000250" key="1"/>
<evidence type="ECO:0000305" key="2"/>
<comment type="function">
    <text evidence="1">Murein-degrading enzyme. Catalyzes the cleavage of the glycosidic bonds between N-acetylmuramic acid and N-acetylglucosamine residues in peptidoglycan. May play a role in recycling of muropeptides during cell elongation and/or cell division (By similarity).</text>
</comment>
<comment type="catalytic activity">
    <reaction>
        <text>Exolytic cleavage of the (1-&gt;4)-beta-glycosidic linkage between N-acetylmuramic acid (MurNAc) and N-acetylglucosamine (GlcNAc) residues in peptidoglycan, from either the reducing or the non-reducing ends of the peptidoglycan chains, with concomitant formation of a 1,6-anhydrobond in the MurNAc residue.</text>
        <dbReference type="EC" id="4.2.2.n1"/>
    </reaction>
</comment>
<comment type="subcellular location">
    <subcellularLocation>
        <location evidence="2">Periplasm</location>
    </subcellularLocation>
</comment>
<comment type="similarity">
    <text evidence="2">Belongs to the transglycosylase Slt family.</text>
</comment>
<keyword id="KW-0961">Cell wall biogenesis/degradation</keyword>
<keyword id="KW-0456">Lyase</keyword>
<keyword id="KW-0574">Periplasm</keyword>
<organism>
    <name type="scientific">Enterobacter cloacae</name>
    <dbReference type="NCBI Taxonomy" id="550"/>
    <lineage>
        <taxon>Bacteria</taxon>
        <taxon>Pseudomonadati</taxon>
        <taxon>Pseudomonadota</taxon>
        <taxon>Gammaproteobacteria</taxon>
        <taxon>Enterobacterales</taxon>
        <taxon>Enterobacteriaceae</taxon>
        <taxon>Enterobacter</taxon>
        <taxon>Enterobacter cloacae complex</taxon>
    </lineage>
</organism>
<protein>
    <recommendedName>
        <fullName>Soluble lytic murein transglycosylase</fullName>
        <ecNumber>4.2.2.n1</ecNumber>
    </recommendedName>
    <alternativeName>
        <fullName>Peptidoglycan lytic exotransglycosylase</fullName>
    </alternativeName>
    <alternativeName>
        <fullName>Slt70</fullName>
    </alternativeName>
</protein>
<accession>P39433</accession>